<gene>
    <name evidence="1" type="primary">aspS</name>
    <name type="ordered locus">P9211_18201</name>
</gene>
<proteinExistence type="inferred from homology"/>
<dbReference type="EC" id="6.1.1.23" evidence="1"/>
<dbReference type="EMBL" id="CP000878">
    <property type="protein sequence ID" value="ABX09751.1"/>
    <property type="molecule type" value="Genomic_DNA"/>
</dbReference>
<dbReference type="RefSeq" id="WP_012196371.1">
    <property type="nucleotide sequence ID" value="NC_009976.1"/>
</dbReference>
<dbReference type="SMR" id="A9BDD8"/>
<dbReference type="STRING" id="93059.P9211_18201"/>
<dbReference type="KEGG" id="pmj:P9211_18201"/>
<dbReference type="eggNOG" id="COG0173">
    <property type="taxonomic scope" value="Bacteria"/>
</dbReference>
<dbReference type="HOGENOM" id="CLU_014330_3_2_3"/>
<dbReference type="OrthoDB" id="9802326at2"/>
<dbReference type="Proteomes" id="UP000000788">
    <property type="component" value="Chromosome"/>
</dbReference>
<dbReference type="GO" id="GO:0005737">
    <property type="term" value="C:cytoplasm"/>
    <property type="evidence" value="ECO:0007669"/>
    <property type="project" value="UniProtKB-SubCell"/>
</dbReference>
<dbReference type="GO" id="GO:0004815">
    <property type="term" value="F:aspartate-tRNA ligase activity"/>
    <property type="evidence" value="ECO:0007669"/>
    <property type="project" value="UniProtKB-UniRule"/>
</dbReference>
<dbReference type="GO" id="GO:0050560">
    <property type="term" value="F:aspartate-tRNA(Asn) ligase activity"/>
    <property type="evidence" value="ECO:0007669"/>
    <property type="project" value="UniProtKB-EC"/>
</dbReference>
<dbReference type="GO" id="GO:0005524">
    <property type="term" value="F:ATP binding"/>
    <property type="evidence" value="ECO:0007669"/>
    <property type="project" value="UniProtKB-UniRule"/>
</dbReference>
<dbReference type="GO" id="GO:0003676">
    <property type="term" value="F:nucleic acid binding"/>
    <property type="evidence" value="ECO:0007669"/>
    <property type="project" value="InterPro"/>
</dbReference>
<dbReference type="GO" id="GO:0006422">
    <property type="term" value="P:aspartyl-tRNA aminoacylation"/>
    <property type="evidence" value="ECO:0007669"/>
    <property type="project" value="UniProtKB-UniRule"/>
</dbReference>
<dbReference type="CDD" id="cd00777">
    <property type="entry name" value="AspRS_core"/>
    <property type="match status" value="1"/>
</dbReference>
<dbReference type="CDD" id="cd04317">
    <property type="entry name" value="EcAspRS_like_N"/>
    <property type="match status" value="1"/>
</dbReference>
<dbReference type="Gene3D" id="3.30.930.10">
    <property type="entry name" value="Bira Bifunctional Protein, Domain 2"/>
    <property type="match status" value="1"/>
</dbReference>
<dbReference type="Gene3D" id="3.30.1360.30">
    <property type="entry name" value="GAD-like domain"/>
    <property type="match status" value="1"/>
</dbReference>
<dbReference type="Gene3D" id="2.40.50.140">
    <property type="entry name" value="Nucleic acid-binding proteins"/>
    <property type="match status" value="1"/>
</dbReference>
<dbReference type="HAMAP" id="MF_00044">
    <property type="entry name" value="Asp_tRNA_synth_type1"/>
    <property type="match status" value="1"/>
</dbReference>
<dbReference type="InterPro" id="IPR004364">
    <property type="entry name" value="Aa-tRNA-synt_II"/>
</dbReference>
<dbReference type="InterPro" id="IPR006195">
    <property type="entry name" value="aa-tRNA-synth_II"/>
</dbReference>
<dbReference type="InterPro" id="IPR045864">
    <property type="entry name" value="aa-tRNA-synth_II/BPL/LPL"/>
</dbReference>
<dbReference type="InterPro" id="IPR004524">
    <property type="entry name" value="Asp-tRNA-ligase_1"/>
</dbReference>
<dbReference type="InterPro" id="IPR047089">
    <property type="entry name" value="Asp-tRNA-ligase_1_N"/>
</dbReference>
<dbReference type="InterPro" id="IPR002312">
    <property type="entry name" value="Asp/Asn-tRNA-synth_IIb"/>
</dbReference>
<dbReference type="InterPro" id="IPR047090">
    <property type="entry name" value="AspRS_core"/>
</dbReference>
<dbReference type="InterPro" id="IPR004115">
    <property type="entry name" value="GAD-like_sf"/>
</dbReference>
<dbReference type="InterPro" id="IPR029351">
    <property type="entry name" value="GAD_dom"/>
</dbReference>
<dbReference type="InterPro" id="IPR012340">
    <property type="entry name" value="NA-bd_OB-fold"/>
</dbReference>
<dbReference type="InterPro" id="IPR004365">
    <property type="entry name" value="NA-bd_OB_tRNA"/>
</dbReference>
<dbReference type="NCBIfam" id="TIGR00459">
    <property type="entry name" value="aspS_bact"/>
    <property type="match status" value="1"/>
</dbReference>
<dbReference type="NCBIfam" id="NF001750">
    <property type="entry name" value="PRK00476.1"/>
    <property type="match status" value="1"/>
</dbReference>
<dbReference type="PANTHER" id="PTHR22594:SF5">
    <property type="entry name" value="ASPARTATE--TRNA LIGASE, MITOCHONDRIAL"/>
    <property type="match status" value="1"/>
</dbReference>
<dbReference type="PANTHER" id="PTHR22594">
    <property type="entry name" value="ASPARTYL/LYSYL-TRNA SYNTHETASE"/>
    <property type="match status" value="1"/>
</dbReference>
<dbReference type="Pfam" id="PF02938">
    <property type="entry name" value="GAD"/>
    <property type="match status" value="1"/>
</dbReference>
<dbReference type="Pfam" id="PF00152">
    <property type="entry name" value="tRNA-synt_2"/>
    <property type="match status" value="1"/>
</dbReference>
<dbReference type="Pfam" id="PF01336">
    <property type="entry name" value="tRNA_anti-codon"/>
    <property type="match status" value="1"/>
</dbReference>
<dbReference type="PRINTS" id="PR01042">
    <property type="entry name" value="TRNASYNTHASP"/>
</dbReference>
<dbReference type="SUPFAM" id="SSF55681">
    <property type="entry name" value="Class II aaRS and biotin synthetases"/>
    <property type="match status" value="1"/>
</dbReference>
<dbReference type="SUPFAM" id="SSF55261">
    <property type="entry name" value="GAD domain-like"/>
    <property type="match status" value="1"/>
</dbReference>
<dbReference type="SUPFAM" id="SSF50249">
    <property type="entry name" value="Nucleic acid-binding proteins"/>
    <property type="match status" value="1"/>
</dbReference>
<dbReference type="PROSITE" id="PS50862">
    <property type="entry name" value="AA_TRNA_LIGASE_II"/>
    <property type="match status" value="1"/>
</dbReference>
<keyword id="KW-0030">Aminoacyl-tRNA synthetase</keyword>
<keyword id="KW-0067">ATP-binding</keyword>
<keyword id="KW-0963">Cytoplasm</keyword>
<keyword id="KW-0436">Ligase</keyword>
<keyword id="KW-0547">Nucleotide-binding</keyword>
<keyword id="KW-0648">Protein biosynthesis</keyword>
<keyword id="KW-1185">Reference proteome</keyword>
<name>SYDND_PROM4</name>
<accession>A9BDD8</accession>
<organism>
    <name type="scientific">Prochlorococcus marinus (strain MIT 9211)</name>
    <dbReference type="NCBI Taxonomy" id="93059"/>
    <lineage>
        <taxon>Bacteria</taxon>
        <taxon>Bacillati</taxon>
        <taxon>Cyanobacteriota</taxon>
        <taxon>Cyanophyceae</taxon>
        <taxon>Synechococcales</taxon>
        <taxon>Prochlorococcaceae</taxon>
        <taxon>Prochlorococcus</taxon>
    </lineage>
</organism>
<sequence>MRSNYCGALRNEHINSKVQLCGWVDRCRDHGGVIFIDLRDSSGTMQITVDPDQGTDLFNIAESLKNETVIQVTGKVRSRPEESINKKLETGQIEVLADVLKVLNPVYGNLPFAVSVHDDEPLKEEIRLKHRYLDLRRERMKKNLHLRHATIQTARNFLEEEGFIEVETPILTRSTPEGARDYLVPSRVCEGEWFALPQSPQIFKQLLMVGGIERYYQVARCFRDEDLRSDRQPEFTQLDMEMSFMSQEEILCLNERLIACIWKKIKGKDIKVPFPRLSWQESMDRYGTDRPDTRYGMELVDVSSIVKDIGFKVFSGAIQAGGSVKCIKVEEGNQSISNVRIKPGGDVFNEAQKAGAKGLAFIRVRVNNEIDTIGAIKDNLNNQQKNELLLKTKAKPGDLILFAAGDTEIVHKTLDKVRQFLAKELRLISTGKSKDQWNFLWVIDFPMFNFNKDEKRHEAMHHPFCAPNAKDIGGDPGLWEENLPKARAQAYDLVLNGLELGGGSLRIHNPELQQKVLETIGIAKDEATEQFGFLLNALEMGAPPHGGLAFGLDRIVMLLSEEDSIRDTIAFPKTQQARCLMAQAPNEVSKRQLKELHIASTWVDNE</sequence>
<evidence type="ECO:0000255" key="1">
    <source>
        <dbReference type="HAMAP-Rule" id="MF_00044"/>
    </source>
</evidence>
<feature type="chain" id="PRO_1000091027" description="Aspartate--tRNA(Asp/Asn) ligase">
    <location>
        <begin position="1"/>
        <end position="606"/>
    </location>
</feature>
<feature type="region of interest" description="Aspartate" evidence="1">
    <location>
        <begin position="201"/>
        <end position="204"/>
    </location>
</feature>
<feature type="binding site" evidence="1">
    <location>
        <position position="177"/>
    </location>
    <ligand>
        <name>L-aspartate</name>
        <dbReference type="ChEBI" id="CHEBI:29991"/>
    </ligand>
</feature>
<feature type="binding site" evidence="1">
    <location>
        <begin position="223"/>
        <end position="225"/>
    </location>
    <ligand>
        <name>ATP</name>
        <dbReference type="ChEBI" id="CHEBI:30616"/>
    </ligand>
</feature>
<feature type="binding site" evidence="1">
    <location>
        <position position="223"/>
    </location>
    <ligand>
        <name>L-aspartate</name>
        <dbReference type="ChEBI" id="CHEBI:29991"/>
    </ligand>
</feature>
<feature type="binding site" evidence="1">
    <location>
        <position position="232"/>
    </location>
    <ligand>
        <name>ATP</name>
        <dbReference type="ChEBI" id="CHEBI:30616"/>
    </ligand>
</feature>
<feature type="binding site" evidence="1">
    <location>
        <position position="461"/>
    </location>
    <ligand>
        <name>L-aspartate</name>
        <dbReference type="ChEBI" id="CHEBI:29991"/>
    </ligand>
</feature>
<feature type="binding site" evidence="1">
    <location>
        <position position="499"/>
    </location>
    <ligand>
        <name>ATP</name>
        <dbReference type="ChEBI" id="CHEBI:30616"/>
    </ligand>
</feature>
<feature type="binding site" evidence="1">
    <location>
        <position position="506"/>
    </location>
    <ligand>
        <name>L-aspartate</name>
        <dbReference type="ChEBI" id="CHEBI:29991"/>
    </ligand>
</feature>
<feature type="binding site" evidence="1">
    <location>
        <begin position="551"/>
        <end position="554"/>
    </location>
    <ligand>
        <name>ATP</name>
        <dbReference type="ChEBI" id="CHEBI:30616"/>
    </ligand>
</feature>
<feature type="site" description="Important for tRNA non-discrimination" evidence="1">
    <location>
        <position position="30"/>
    </location>
</feature>
<reference key="1">
    <citation type="journal article" date="2007" name="PLoS Genet.">
        <title>Patterns and implications of gene gain and loss in the evolution of Prochlorococcus.</title>
        <authorList>
            <person name="Kettler G.C."/>
            <person name="Martiny A.C."/>
            <person name="Huang K."/>
            <person name="Zucker J."/>
            <person name="Coleman M.L."/>
            <person name="Rodrigue S."/>
            <person name="Chen F."/>
            <person name="Lapidus A."/>
            <person name="Ferriera S."/>
            <person name="Johnson J."/>
            <person name="Steglich C."/>
            <person name="Church G.M."/>
            <person name="Richardson P."/>
            <person name="Chisholm S.W."/>
        </authorList>
    </citation>
    <scope>NUCLEOTIDE SEQUENCE [LARGE SCALE GENOMIC DNA]</scope>
    <source>
        <strain>MIT 9211</strain>
    </source>
</reference>
<comment type="function">
    <text evidence="1">Aspartyl-tRNA synthetase with relaxed tRNA specificity since it is able to aspartylate not only its cognate tRNA(Asp) but also tRNA(Asn). Reaction proceeds in two steps: L-aspartate is first activated by ATP to form Asp-AMP and then transferred to the acceptor end of tRNA(Asp/Asn).</text>
</comment>
<comment type="catalytic activity">
    <reaction evidence="1">
        <text>tRNA(Asx) + L-aspartate + ATP = L-aspartyl-tRNA(Asx) + AMP + diphosphate</text>
        <dbReference type="Rhea" id="RHEA:18349"/>
        <dbReference type="Rhea" id="RHEA-COMP:9710"/>
        <dbReference type="Rhea" id="RHEA-COMP:9711"/>
        <dbReference type="ChEBI" id="CHEBI:29991"/>
        <dbReference type="ChEBI" id="CHEBI:30616"/>
        <dbReference type="ChEBI" id="CHEBI:33019"/>
        <dbReference type="ChEBI" id="CHEBI:78442"/>
        <dbReference type="ChEBI" id="CHEBI:78516"/>
        <dbReference type="ChEBI" id="CHEBI:456215"/>
        <dbReference type="EC" id="6.1.1.23"/>
    </reaction>
</comment>
<comment type="subunit">
    <text evidence="1">Homodimer.</text>
</comment>
<comment type="subcellular location">
    <subcellularLocation>
        <location evidence="1">Cytoplasm</location>
    </subcellularLocation>
</comment>
<comment type="similarity">
    <text evidence="1">Belongs to the class-II aminoacyl-tRNA synthetase family. Type 1 subfamily.</text>
</comment>
<protein>
    <recommendedName>
        <fullName evidence="1">Aspartate--tRNA(Asp/Asn) ligase</fullName>
        <ecNumber evidence="1">6.1.1.23</ecNumber>
    </recommendedName>
    <alternativeName>
        <fullName evidence="1">Aspartyl-tRNA synthetase</fullName>
        <shortName evidence="1">AspRS</shortName>
    </alternativeName>
    <alternativeName>
        <fullName evidence="1">Non-discriminating aspartyl-tRNA synthetase</fullName>
        <shortName evidence="1">ND-AspRS</shortName>
    </alternativeName>
</protein>